<feature type="chain" id="PRO_0000352802" description="EKC/KEOPS complex subunit GON7">
    <location>
        <begin position="1"/>
        <end position="100"/>
    </location>
</feature>
<feature type="region of interest" description="Disordered" evidence="2">
    <location>
        <begin position="50"/>
        <end position="100"/>
    </location>
</feature>
<feature type="compositionally biased region" description="Acidic residues" evidence="2">
    <location>
        <begin position="66"/>
        <end position="81"/>
    </location>
</feature>
<feature type="modified residue" description="N-acetylmethionine" evidence="1">
    <location>
        <position position="1"/>
    </location>
</feature>
<sequence>MELLGEYVGQDGQRQRLRVPCEAPGNADHFQGLLSGVARMKELVAELFGSPVQGEAQDRVAAAPEEALDGDDEDDAEDENNIDNRTNSDGPTAKRPKPPS</sequence>
<reference key="1">
    <citation type="journal article" date="2007" name="Genome Biol.">
        <title>Porcine transcriptome analysis based on 97 non-normalized cDNA libraries and assembly of 1,021,891 expressed sequence tags.</title>
        <authorList>
            <person name="Gorodkin J."/>
            <person name="Cirera S."/>
            <person name="Hedegaard J."/>
            <person name="Gilchrist M.J."/>
            <person name="Panitz F."/>
            <person name="Jorgensen C.B."/>
            <person name="Scheibye-Knudsen K."/>
            <person name="Arvin T."/>
            <person name="Lumholdt S."/>
            <person name="Sawera M."/>
            <person name="Green T."/>
            <person name="Nielsen B.J."/>
            <person name="Havgaard J.H."/>
            <person name="Rosenkilde C."/>
            <person name="Wang J."/>
            <person name="Li H."/>
            <person name="Li R."/>
            <person name="Liu B."/>
            <person name="Hu S."/>
            <person name="Dong W."/>
            <person name="Li W."/>
            <person name="Yu J."/>
            <person name="Wang J."/>
            <person name="Staerfeldt H.H."/>
            <person name="Wernersson R."/>
            <person name="Madsen L.B."/>
            <person name="Thomsen B."/>
            <person name="Hornshoj H."/>
            <person name="Bujie Z."/>
            <person name="Wang X."/>
            <person name="Wang X."/>
            <person name="Bolund L."/>
            <person name="Brunak S."/>
            <person name="Yang H."/>
            <person name="Bendixen C."/>
            <person name="Fredholm M."/>
        </authorList>
    </citation>
    <scope>NUCLEOTIDE SEQUENCE [LARGE SCALE MRNA]</scope>
</reference>
<reference key="2">
    <citation type="journal article" date="2005" name="BMC Biol.">
        <title>Comparative analysis of protein coding sequences from human, mouse and the domesticated pig.</title>
        <authorList>
            <person name="Jorgensen F.G."/>
            <person name="Hobolth A."/>
            <person name="Hornshoj H."/>
            <person name="Bendixen C."/>
            <person name="Fredholm M."/>
            <person name="Schierup M.H."/>
        </authorList>
    </citation>
    <scope>NUCLEOTIDE SEQUENCE [MRNA] OF 7-100</scope>
</reference>
<dbReference type="EMBL" id="EW673700">
    <property type="status" value="NOT_ANNOTATED_CDS"/>
    <property type="molecule type" value="mRNA"/>
</dbReference>
<dbReference type="EMBL" id="AY610397">
    <property type="status" value="NOT_ANNOTATED_CDS"/>
    <property type="molecule type" value="mRNA"/>
</dbReference>
<dbReference type="RefSeq" id="NP_001161062.1">
    <property type="nucleotide sequence ID" value="NM_001167590.1"/>
</dbReference>
<dbReference type="SMR" id="P0C8B5"/>
<dbReference type="FunCoup" id="P0C8B5">
    <property type="interactions" value="210"/>
</dbReference>
<dbReference type="STRING" id="9823.ENSSSCP00000074435"/>
<dbReference type="PaxDb" id="9823-ENSSSCP00000002661"/>
<dbReference type="PeptideAtlas" id="P0C8B5"/>
<dbReference type="Ensembl" id="ENSSSCT00000095665.1">
    <property type="protein sequence ID" value="ENSSSCP00000079089.1"/>
    <property type="gene ID" value="ENSSSCG00000051892.1"/>
</dbReference>
<dbReference type="Ensembl" id="ENSSSCT00015020297.1">
    <property type="protein sequence ID" value="ENSSSCP00015007950.1"/>
    <property type="gene ID" value="ENSSSCG00015015343.1"/>
</dbReference>
<dbReference type="Ensembl" id="ENSSSCT00025025022.1">
    <property type="protein sequence ID" value="ENSSSCP00025010567.1"/>
    <property type="gene ID" value="ENSSSCG00025018455.1"/>
</dbReference>
<dbReference type="Ensembl" id="ENSSSCT00035044159.1">
    <property type="protein sequence ID" value="ENSSSCP00035017693.1"/>
    <property type="gene ID" value="ENSSSCG00035033322.1"/>
</dbReference>
<dbReference type="Ensembl" id="ENSSSCT00040084535.1">
    <property type="protein sequence ID" value="ENSSSCP00040036887.1"/>
    <property type="gene ID" value="ENSSSCG00040062096.1"/>
</dbReference>
<dbReference type="Ensembl" id="ENSSSCT00050069516.1">
    <property type="protein sequence ID" value="ENSSSCP00050029875.1"/>
    <property type="gene ID" value="ENSSSCG00050051064.1"/>
</dbReference>
<dbReference type="Ensembl" id="ENSSSCT00060069083.1">
    <property type="protein sequence ID" value="ENSSSCP00060029720.1"/>
    <property type="gene ID" value="ENSSSCG00060050784.1"/>
</dbReference>
<dbReference type="Ensembl" id="ENSSSCT00065072527.1">
    <property type="protein sequence ID" value="ENSSSCP00065031598.1"/>
    <property type="gene ID" value="ENSSSCG00065052972.1"/>
</dbReference>
<dbReference type="Ensembl" id="ENSSSCT00070003525.1">
    <property type="protein sequence ID" value="ENSSSCP00070002918.1"/>
    <property type="gene ID" value="ENSSSCG00070001890.1"/>
</dbReference>
<dbReference type="Ensembl" id="ENSSSCT00085044225">
    <property type="protein sequence ID" value="ENSSSCP00085030900"/>
    <property type="gene ID" value="ENSSSCG00085023054"/>
</dbReference>
<dbReference type="Ensembl" id="ENSSSCT00090026271">
    <property type="protein sequence ID" value="ENSSSCP00090016179"/>
    <property type="gene ID" value="ENSSSCG00090014968"/>
</dbReference>
<dbReference type="Ensembl" id="ENSSSCT00105009045">
    <property type="protein sequence ID" value="ENSSSCP00105006570"/>
    <property type="gene ID" value="ENSSSCG00105004542"/>
</dbReference>
<dbReference type="Ensembl" id="ENSSSCT00110018217">
    <property type="protein sequence ID" value="ENSSSCP00110012415"/>
    <property type="gene ID" value="ENSSSCG00110009445"/>
</dbReference>
<dbReference type="Ensembl" id="ENSSSCT00115033104">
    <property type="protein sequence ID" value="ENSSSCP00115031435"/>
    <property type="gene ID" value="ENSSSCG00115018711"/>
</dbReference>
<dbReference type="Ensembl" id="ENSSSCT00130055890">
    <property type="protein sequence ID" value="ENSSSCP00130040094"/>
    <property type="gene ID" value="ENSSSCG00130028615"/>
</dbReference>
<dbReference type="GeneID" id="100155082"/>
<dbReference type="KEGG" id="ssc:100155082"/>
<dbReference type="CTD" id="84520"/>
<dbReference type="eggNOG" id="ENOG502SW4V">
    <property type="taxonomic scope" value="Eukaryota"/>
</dbReference>
<dbReference type="GeneTree" id="ENSGT00490000044274"/>
<dbReference type="HOGENOM" id="CLU_180906_0_0_1"/>
<dbReference type="InParanoid" id="P0C8B5"/>
<dbReference type="OMA" id="KTCVDGP"/>
<dbReference type="OrthoDB" id="8905128at2759"/>
<dbReference type="Proteomes" id="UP000008227">
    <property type="component" value="Chromosome 7"/>
</dbReference>
<dbReference type="Proteomes" id="UP000314985">
    <property type="component" value="Chromosome 7"/>
</dbReference>
<dbReference type="Proteomes" id="UP000694570">
    <property type="component" value="Unplaced"/>
</dbReference>
<dbReference type="Proteomes" id="UP000694571">
    <property type="component" value="Unplaced"/>
</dbReference>
<dbReference type="Proteomes" id="UP000694720">
    <property type="component" value="Unplaced"/>
</dbReference>
<dbReference type="Proteomes" id="UP000694722">
    <property type="component" value="Unplaced"/>
</dbReference>
<dbReference type="Proteomes" id="UP000694723">
    <property type="component" value="Unplaced"/>
</dbReference>
<dbReference type="Proteomes" id="UP000694724">
    <property type="component" value="Unplaced"/>
</dbReference>
<dbReference type="Proteomes" id="UP000694725">
    <property type="component" value="Unplaced"/>
</dbReference>
<dbReference type="Proteomes" id="UP000694726">
    <property type="component" value="Unplaced"/>
</dbReference>
<dbReference type="Proteomes" id="UP000694727">
    <property type="component" value="Unplaced"/>
</dbReference>
<dbReference type="Proteomes" id="UP000694728">
    <property type="component" value="Unplaced"/>
</dbReference>
<dbReference type="GO" id="GO:0005829">
    <property type="term" value="C:cytosol"/>
    <property type="evidence" value="ECO:0007669"/>
    <property type="project" value="Ensembl"/>
</dbReference>
<dbReference type="GO" id="GO:0000408">
    <property type="term" value="C:EKC/KEOPS complex"/>
    <property type="evidence" value="ECO:0000250"/>
    <property type="project" value="UniProtKB"/>
</dbReference>
<dbReference type="GO" id="GO:0005730">
    <property type="term" value="C:nucleolus"/>
    <property type="evidence" value="ECO:0007669"/>
    <property type="project" value="Ensembl"/>
</dbReference>
<dbReference type="GO" id="GO:0005654">
    <property type="term" value="C:nucleoplasm"/>
    <property type="evidence" value="ECO:0007669"/>
    <property type="project" value="Ensembl"/>
</dbReference>
<dbReference type="GO" id="GO:0005634">
    <property type="term" value="C:nucleus"/>
    <property type="evidence" value="ECO:0000250"/>
    <property type="project" value="UniProtKB"/>
</dbReference>
<dbReference type="GO" id="GO:0002949">
    <property type="term" value="P:tRNA threonylcarbamoyladenosine modification"/>
    <property type="evidence" value="ECO:0000250"/>
    <property type="project" value="UniProtKB"/>
</dbReference>
<dbReference type="InterPro" id="IPR027893">
    <property type="entry name" value="GON7_meta"/>
</dbReference>
<dbReference type="PANTHER" id="PTHR37363">
    <property type="entry name" value="EKC/KEOPS COMPLEX SUBUNIT GON7"/>
    <property type="match status" value="1"/>
</dbReference>
<dbReference type="PANTHER" id="PTHR37363:SF1">
    <property type="entry name" value="EKC_KEOPS COMPLEX SUBUNIT GON7"/>
    <property type="match status" value="1"/>
</dbReference>
<dbReference type="Pfam" id="PF15387">
    <property type="entry name" value="DUF4611"/>
    <property type="match status" value="1"/>
</dbReference>
<gene>
    <name evidence="1" type="primary">GON7</name>
</gene>
<comment type="function">
    <text evidence="1">Component of the EKC/KEOPS complex that is required for the formation of a threonylcarbamoyl group on adenosine at position 37 (t(6)A37) in tRNAs that read codons beginning with adenine. The complex is probably involved in the transfer of the threonylcarbamoyl moiety of threonylcarbamoyl-AMP (TC-AMP) to the N6 group of A37. GON7 plays a supporting role to the catalytic subunit OSGEP in the complex.</text>
</comment>
<comment type="subunit">
    <text evidence="1">Component of the EKC/KEOPS complex composed of at least GON7, TP53RK, TPRKB, OSGEP and LAGE3; the whole complex dimerizes.</text>
</comment>
<comment type="subcellular location">
    <subcellularLocation>
        <location evidence="1">Nucleus</location>
    </subcellularLocation>
</comment>
<organism>
    <name type="scientific">Sus scrofa</name>
    <name type="common">Pig</name>
    <dbReference type="NCBI Taxonomy" id="9823"/>
    <lineage>
        <taxon>Eukaryota</taxon>
        <taxon>Metazoa</taxon>
        <taxon>Chordata</taxon>
        <taxon>Craniata</taxon>
        <taxon>Vertebrata</taxon>
        <taxon>Euteleostomi</taxon>
        <taxon>Mammalia</taxon>
        <taxon>Eutheria</taxon>
        <taxon>Laurasiatheria</taxon>
        <taxon>Artiodactyla</taxon>
        <taxon>Suina</taxon>
        <taxon>Suidae</taxon>
        <taxon>Sus</taxon>
    </lineage>
</organism>
<proteinExistence type="inferred from homology"/>
<name>GON7_PIG</name>
<keyword id="KW-0007">Acetylation</keyword>
<keyword id="KW-0539">Nucleus</keyword>
<keyword id="KW-1185">Reference proteome</keyword>
<evidence type="ECO:0000250" key="1">
    <source>
        <dbReference type="UniProtKB" id="Q9BXV9"/>
    </source>
</evidence>
<evidence type="ECO:0000256" key="2">
    <source>
        <dbReference type="SAM" id="MobiDB-lite"/>
    </source>
</evidence>
<evidence type="ECO:0000305" key="3"/>
<protein>
    <recommendedName>
        <fullName evidence="3">EKC/KEOPS complex subunit GON7</fullName>
    </recommendedName>
</protein>
<accession>P0C8B5</accession>